<protein>
    <recommendedName>
        <fullName evidence="1">L-rhamnose mutarotase</fullName>
        <ecNumber evidence="1">5.1.3.32</ecNumber>
    </recommendedName>
    <alternativeName>
        <fullName evidence="1">Rhamnose 1-epimerase</fullName>
    </alternativeName>
    <alternativeName>
        <fullName evidence="1">Type-3 mutarotase</fullName>
    </alternativeName>
</protein>
<name>RHAM_KLEP7</name>
<reference key="1">
    <citation type="submission" date="2006-09" db="EMBL/GenBank/DDBJ databases">
        <authorList>
            <consortium name="The Klebsiella pneumonia Genome Sequencing Project"/>
            <person name="McClelland M."/>
            <person name="Sanderson E.K."/>
            <person name="Spieth J."/>
            <person name="Clifton W.S."/>
            <person name="Latreille P."/>
            <person name="Sabo A."/>
            <person name="Pepin K."/>
            <person name="Bhonagiri V."/>
            <person name="Porwollik S."/>
            <person name="Ali J."/>
            <person name="Wilson R.K."/>
        </authorList>
    </citation>
    <scope>NUCLEOTIDE SEQUENCE [LARGE SCALE GENOMIC DNA]</scope>
    <source>
        <strain>ATCC 700721 / MGH 78578</strain>
    </source>
</reference>
<dbReference type="EC" id="5.1.3.32" evidence="1"/>
<dbReference type="EMBL" id="CP000647">
    <property type="protein sequence ID" value="ABR79584.1"/>
    <property type="molecule type" value="Genomic_DNA"/>
</dbReference>
<dbReference type="RefSeq" id="WP_015959204.1">
    <property type="nucleotide sequence ID" value="NC_009648.1"/>
</dbReference>
<dbReference type="SMR" id="A6TGA0"/>
<dbReference type="STRING" id="272620.KPN_04205"/>
<dbReference type="PaxDb" id="272620-KPN_04205"/>
<dbReference type="EnsemblBacteria" id="ABR79584">
    <property type="protein sequence ID" value="ABR79584"/>
    <property type="gene ID" value="KPN_04205"/>
</dbReference>
<dbReference type="KEGG" id="kpn:KPN_04205"/>
<dbReference type="HOGENOM" id="CLU_100689_2_0_6"/>
<dbReference type="UniPathway" id="UPA00125"/>
<dbReference type="Proteomes" id="UP000000265">
    <property type="component" value="Chromosome"/>
</dbReference>
<dbReference type="GO" id="GO:0005737">
    <property type="term" value="C:cytoplasm"/>
    <property type="evidence" value="ECO:0007669"/>
    <property type="project" value="UniProtKB-SubCell"/>
</dbReference>
<dbReference type="GO" id="GO:0062192">
    <property type="term" value="F:L-rhamnose mutarotase activity"/>
    <property type="evidence" value="ECO:0007669"/>
    <property type="project" value="UniProtKB-EC"/>
</dbReference>
<dbReference type="GO" id="GO:0019301">
    <property type="term" value="P:rhamnose catabolic process"/>
    <property type="evidence" value="ECO:0007669"/>
    <property type="project" value="TreeGrafter"/>
</dbReference>
<dbReference type="Gene3D" id="3.30.70.100">
    <property type="match status" value="1"/>
</dbReference>
<dbReference type="HAMAP" id="MF_01663">
    <property type="entry name" value="L_rham_rotase"/>
    <property type="match status" value="1"/>
</dbReference>
<dbReference type="InterPro" id="IPR011008">
    <property type="entry name" value="Dimeric_a/b-barrel"/>
</dbReference>
<dbReference type="InterPro" id="IPR013448">
    <property type="entry name" value="L-rhamnose_mutarotase"/>
</dbReference>
<dbReference type="InterPro" id="IPR008000">
    <property type="entry name" value="Rham/fucose_mutarotase"/>
</dbReference>
<dbReference type="NCBIfam" id="TIGR02625">
    <property type="entry name" value="YiiL_rotase"/>
    <property type="match status" value="1"/>
</dbReference>
<dbReference type="PANTHER" id="PTHR34389">
    <property type="entry name" value="L-RHAMNOSE MUTAROTASE"/>
    <property type="match status" value="1"/>
</dbReference>
<dbReference type="PANTHER" id="PTHR34389:SF2">
    <property type="entry name" value="L-RHAMNOSE MUTAROTASE"/>
    <property type="match status" value="1"/>
</dbReference>
<dbReference type="Pfam" id="PF05336">
    <property type="entry name" value="rhaM"/>
    <property type="match status" value="1"/>
</dbReference>
<dbReference type="SUPFAM" id="SSF54909">
    <property type="entry name" value="Dimeric alpha+beta barrel"/>
    <property type="match status" value="1"/>
</dbReference>
<accession>A6TGA0</accession>
<keyword id="KW-0119">Carbohydrate metabolism</keyword>
<keyword id="KW-0963">Cytoplasm</keyword>
<keyword id="KW-0413">Isomerase</keyword>
<keyword id="KW-0684">Rhamnose metabolism</keyword>
<organism>
    <name type="scientific">Klebsiella pneumoniae subsp. pneumoniae (strain ATCC 700721 / MGH 78578)</name>
    <dbReference type="NCBI Taxonomy" id="272620"/>
    <lineage>
        <taxon>Bacteria</taxon>
        <taxon>Pseudomonadati</taxon>
        <taxon>Pseudomonadota</taxon>
        <taxon>Gammaproteobacteria</taxon>
        <taxon>Enterobacterales</taxon>
        <taxon>Enterobacteriaceae</taxon>
        <taxon>Klebsiella/Raoultella group</taxon>
        <taxon>Klebsiella</taxon>
        <taxon>Klebsiella pneumoniae complex</taxon>
    </lineage>
</organism>
<evidence type="ECO:0000255" key="1">
    <source>
        <dbReference type="HAMAP-Rule" id="MF_01663"/>
    </source>
</evidence>
<sequence length="104" mass="12391">MIRKAFVMQVNPDAHEEYQRRHNHIWPELEAVLKAHGAHHYAIYLDKERHLLFATVEIESEARWEAVASTEVCQRWWKYMREVMPSNPDNSPLSAELKEVFYLA</sequence>
<gene>
    <name evidence="1" type="primary">rhaM</name>
    <name type="ordered locus">KPN78578_41600</name>
    <name type="ORF">KPN_04205</name>
</gene>
<proteinExistence type="inferred from homology"/>
<feature type="chain" id="PRO_0000344581" description="L-rhamnose mutarotase">
    <location>
        <begin position="1"/>
        <end position="104"/>
    </location>
</feature>
<feature type="active site" description="Proton donor" evidence="1">
    <location>
        <position position="22"/>
    </location>
</feature>
<feature type="binding site" evidence="1">
    <location>
        <position position="18"/>
    </location>
    <ligand>
        <name>substrate</name>
    </ligand>
</feature>
<feature type="binding site" evidence="1">
    <location>
        <position position="41"/>
    </location>
    <ligand>
        <name>substrate</name>
    </ligand>
</feature>
<feature type="binding site" evidence="1">
    <location>
        <begin position="76"/>
        <end position="77"/>
    </location>
    <ligand>
        <name>substrate</name>
    </ligand>
</feature>
<comment type="function">
    <text evidence="1">Involved in the anomeric conversion of L-rhamnose.</text>
</comment>
<comment type="catalytic activity">
    <reaction evidence="1">
        <text>alpha-L-rhamnose = beta-L-rhamnose</text>
        <dbReference type="Rhea" id="RHEA:25584"/>
        <dbReference type="ChEBI" id="CHEBI:27586"/>
        <dbReference type="ChEBI" id="CHEBI:27907"/>
        <dbReference type="EC" id="5.1.3.32"/>
    </reaction>
</comment>
<comment type="pathway">
    <text evidence="1">Carbohydrate metabolism; L-rhamnose metabolism.</text>
</comment>
<comment type="subunit">
    <text evidence="1">Homodimer.</text>
</comment>
<comment type="subcellular location">
    <subcellularLocation>
        <location evidence="1">Cytoplasm</location>
    </subcellularLocation>
</comment>
<comment type="similarity">
    <text evidence="1">Belongs to the rhamnose mutarotase family.</text>
</comment>